<gene>
    <name evidence="1" type="primary">fdhE</name>
    <name type="ordered locus">HAPS_0670</name>
</gene>
<protein>
    <recommendedName>
        <fullName evidence="1">Protein FdhE homolog</fullName>
    </recommendedName>
</protein>
<comment type="function">
    <text evidence="1">Necessary for formate dehydrogenase activity.</text>
</comment>
<comment type="subcellular location">
    <subcellularLocation>
        <location evidence="1">Cytoplasm</location>
    </subcellularLocation>
</comment>
<comment type="similarity">
    <text evidence="1">Belongs to the FdhE family.</text>
</comment>
<name>FDHE_GLAP5</name>
<dbReference type="EMBL" id="CP001321">
    <property type="protein sequence ID" value="ACL32318.1"/>
    <property type="molecule type" value="Genomic_DNA"/>
</dbReference>
<dbReference type="RefSeq" id="WP_010786700.1">
    <property type="nucleotide sequence ID" value="NC_011852.1"/>
</dbReference>
<dbReference type="SMR" id="B8F4R6"/>
<dbReference type="STRING" id="557723.HAPS_0670"/>
<dbReference type="KEGG" id="hap:HAPS_0670"/>
<dbReference type="PATRIC" id="fig|557723.8.peg.670"/>
<dbReference type="HOGENOM" id="CLU_055275_0_0_6"/>
<dbReference type="Proteomes" id="UP000006743">
    <property type="component" value="Chromosome"/>
</dbReference>
<dbReference type="GO" id="GO:0005829">
    <property type="term" value="C:cytosol"/>
    <property type="evidence" value="ECO:0007669"/>
    <property type="project" value="TreeGrafter"/>
</dbReference>
<dbReference type="GO" id="GO:0008199">
    <property type="term" value="F:ferric iron binding"/>
    <property type="evidence" value="ECO:0007669"/>
    <property type="project" value="TreeGrafter"/>
</dbReference>
<dbReference type="GO" id="GO:0051604">
    <property type="term" value="P:protein maturation"/>
    <property type="evidence" value="ECO:0007669"/>
    <property type="project" value="TreeGrafter"/>
</dbReference>
<dbReference type="CDD" id="cd16341">
    <property type="entry name" value="FdhE"/>
    <property type="match status" value="1"/>
</dbReference>
<dbReference type="FunFam" id="3.90.1670.10:FF:000001">
    <property type="entry name" value="Protein FdhE"/>
    <property type="match status" value="1"/>
</dbReference>
<dbReference type="Gene3D" id="3.90.1670.10">
    <property type="entry name" value="FdhE-like domain"/>
    <property type="match status" value="1"/>
</dbReference>
<dbReference type="HAMAP" id="MF_00611">
    <property type="entry name" value="FdeH"/>
    <property type="match status" value="1"/>
</dbReference>
<dbReference type="InterPro" id="IPR024064">
    <property type="entry name" value="FdhE-like_sf"/>
</dbReference>
<dbReference type="InterPro" id="IPR056796">
    <property type="entry name" value="FdhE_C"/>
</dbReference>
<dbReference type="InterPro" id="IPR056797">
    <property type="entry name" value="FdhE_central"/>
</dbReference>
<dbReference type="InterPro" id="IPR056774">
    <property type="entry name" value="FdhE_N"/>
</dbReference>
<dbReference type="InterPro" id="IPR006452">
    <property type="entry name" value="Formate_DH_accessory"/>
</dbReference>
<dbReference type="NCBIfam" id="TIGR01562">
    <property type="entry name" value="FdhE"/>
    <property type="match status" value="1"/>
</dbReference>
<dbReference type="NCBIfam" id="NF002925">
    <property type="entry name" value="PRK03564.1"/>
    <property type="match status" value="1"/>
</dbReference>
<dbReference type="PANTHER" id="PTHR37689">
    <property type="entry name" value="PROTEIN FDHE"/>
    <property type="match status" value="1"/>
</dbReference>
<dbReference type="PANTHER" id="PTHR37689:SF1">
    <property type="entry name" value="PROTEIN FDHE"/>
    <property type="match status" value="1"/>
</dbReference>
<dbReference type="Pfam" id="PF24860">
    <property type="entry name" value="FdhE_C"/>
    <property type="match status" value="1"/>
</dbReference>
<dbReference type="Pfam" id="PF24859">
    <property type="entry name" value="FdhE_central"/>
    <property type="match status" value="1"/>
</dbReference>
<dbReference type="Pfam" id="PF04216">
    <property type="entry name" value="FdhE_N"/>
    <property type="match status" value="1"/>
</dbReference>
<dbReference type="PIRSF" id="PIRSF018296">
    <property type="entry name" value="Format_dh_formtn"/>
    <property type="match status" value="1"/>
</dbReference>
<dbReference type="SUPFAM" id="SSF144020">
    <property type="entry name" value="FdhE-like"/>
    <property type="match status" value="1"/>
</dbReference>
<proteinExistence type="inferred from homology"/>
<accession>B8F4R6</accession>
<evidence type="ECO:0000255" key="1">
    <source>
        <dbReference type="HAMAP-Rule" id="MF_00611"/>
    </source>
</evidence>
<feature type="chain" id="PRO_1000147170" description="Protein FdhE homolog">
    <location>
        <begin position="1"/>
        <end position="306"/>
    </location>
</feature>
<sequence length="306" mass="34869">MSIRILPQEEIQQAASSFHNPPLLYANPKNLYARRAKRLRQLAEHNPFGDYLEFVANIVEVQLDLLENQPIANRVGELTAYLEAHQGVKPLDVKTFKRSDEWQKLLLAFIDKFKPYASDTVLATLEWLEKASNSELEMLADHLLNECYEEVGADKAVFLWAVLSLYWVQLTQQLPRNTKAEYGEERHTCPVCNSAPIASVVHFGETQGLRYLHCSLCESEWNMVRAKCSNCEQTGKLDYWSLDSMDAAVKAESCGDCESYLKVMYQDKDPHVEPIADDLGTLFLDAEMEQKGLARSAINPFLFQVE</sequence>
<keyword id="KW-0963">Cytoplasm</keyword>
<keyword id="KW-1185">Reference proteome</keyword>
<organism>
    <name type="scientific">Glaesserella parasuis serovar 5 (strain SH0165)</name>
    <name type="common">Haemophilus parasuis</name>
    <dbReference type="NCBI Taxonomy" id="557723"/>
    <lineage>
        <taxon>Bacteria</taxon>
        <taxon>Pseudomonadati</taxon>
        <taxon>Pseudomonadota</taxon>
        <taxon>Gammaproteobacteria</taxon>
        <taxon>Pasteurellales</taxon>
        <taxon>Pasteurellaceae</taxon>
        <taxon>Glaesserella</taxon>
    </lineage>
</organism>
<reference key="1">
    <citation type="journal article" date="2009" name="J. Bacteriol.">
        <title>Complete genome sequence of Haemophilus parasuis SH0165.</title>
        <authorList>
            <person name="Yue M."/>
            <person name="Yang F."/>
            <person name="Yang J."/>
            <person name="Bei W."/>
            <person name="Cai X."/>
            <person name="Chen L."/>
            <person name="Dong J."/>
            <person name="Zhou R."/>
            <person name="Jin M."/>
            <person name="Jin Q."/>
            <person name="Chen H."/>
        </authorList>
    </citation>
    <scope>NUCLEOTIDE SEQUENCE [LARGE SCALE GENOMIC DNA]</scope>
    <source>
        <strain>SH0165</strain>
    </source>
</reference>